<protein>
    <recommendedName>
        <fullName evidence="3">Hemophilin secretion modulator</fullName>
    </recommendedName>
</protein>
<evidence type="ECO:0000255" key="1"/>
<evidence type="ECO:0000269" key="2">
    <source>
    </source>
</evidence>
<evidence type="ECO:0000303" key="3">
    <source>
    </source>
</evidence>
<evidence type="ECO:0000305" key="4"/>
<evidence type="ECO:0000305" key="5">
    <source>
    </source>
</evidence>
<evidence type="ECO:0000312" key="6">
    <source>
        <dbReference type="EMBL" id="AKA32697.1"/>
    </source>
</evidence>
<keyword id="KW-0998">Cell outer membrane</keyword>
<keyword id="KW-0472">Membrane</keyword>
<keyword id="KW-0732">Signal</keyword>
<keyword id="KW-0812">Transmembrane</keyword>
<keyword id="KW-1134">Transmembrane beta strand</keyword>
<keyword id="KW-0843">Virulence</keyword>
<organism>
    <name type="scientific">Acinetobacter baumannii</name>
    <dbReference type="NCBI Taxonomy" id="470"/>
    <lineage>
        <taxon>Bacteria</taxon>
        <taxon>Pseudomonadati</taxon>
        <taxon>Pseudomonadota</taxon>
        <taxon>Gammaproteobacteria</taxon>
        <taxon>Moraxellales</taxon>
        <taxon>Moraxellaceae</taxon>
        <taxon>Acinetobacter</taxon>
        <taxon>Acinetobacter calcoaceticus/baumannii complex</taxon>
    </lineage>
</organism>
<dbReference type="EMBL" id="CP008706">
    <property type="protein sequence ID" value="AKA32697.1"/>
    <property type="molecule type" value="Genomic_DNA"/>
</dbReference>
<dbReference type="PATRIC" id="fig|470.1345.peg.2937"/>
<dbReference type="Proteomes" id="UP000032746">
    <property type="component" value="Chromosome"/>
</dbReference>
<dbReference type="GO" id="GO:0009279">
    <property type="term" value="C:cell outer membrane"/>
    <property type="evidence" value="ECO:0007669"/>
    <property type="project" value="UniProtKB-SubCell"/>
</dbReference>
<dbReference type="Gene3D" id="1.25.40.10">
    <property type="entry name" value="Tetratricopeptide repeat domain"/>
    <property type="match status" value="1"/>
</dbReference>
<dbReference type="InterPro" id="IPR007655">
    <property type="entry name" value="Slam_C_b-barrel"/>
</dbReference>
<dbReference type="InterPro" id="IPR011990">
    <property type="entry name" value="TPR-like_helical_dom_sf"/>
</dbReference>
<dbReference type="Pfam" id="PF04575">
    <property type="entry name" value="SlipAM"/>
    <property type="match status" value="1"/>
</dbReference>
<dbReference type="Pfam" id="PF24575">
    <property type="entry name" value="TPR_Slam"/>
    <property type="match status" value="1"/>
</dbReference>
<dbReference type="SUPFAM" id="SSF48452">
    <property type="entry name" value="TPR-like"/>
    <property type="match status" value="1"/>
</dbReference>
<reference key="1">
    <citation type="journal article" date="2015" name="J. Bacteriol.">
        <title>Resources for Genetic and Genomic Analysis of Emerging Pathogen Acinetobacter baumannii.</title>
        <authorList>
            <person name="Gallagher L.A."/>
            <person name="Ramage E."/>
            <person name="Weiss E.J."/>
            <person name="Radey M."/>
            <person name="Hayden H.S."/>
            <person name="Held K.G."/>
            <person name="Huse H.K."/>
            <person name="Zurawski D.V."/>
            <person name="Brittnacher M.J."/>
            <person name="Manoil C."/>
        </authorList>
    </citation>
    <scope>NUCLEOTIDE SEQUENCE [LARGE SCALE GENOMIC DNA]</scope>
    <source>
        <strain>AB5075-UW</strain>
    </source>
</reference>
<reference key="2">
    <citation type="journal article" date="2021" name="Nat. Commun.">
        <title>A Slam-dependent hemophore contributes to heme acquisition in the bacterial pathogen Acinetobacter baumannii.</title>
        <authorList>
            <person name="Bateman T.J."/>
            <person name="Shah M."/>
            <person name="Ho T.P."/>
            <person name="Shin H.E."/>
            <person name="Pan C."/>
            <person name="Harris G."/>
            <person name="Fegan J.E."/>
            <person name="Islam E.A."/>
            <person name="Ahn S.K."/>
            <person name="Hooda Y."/>
            <person name="Gray-Owen S.D."/>
            <person name="Chen W."/>
            <person name="Moraes T.F."/>
        </authorList>
    </citation>
    <scope>FUNCTION</scope>
    <scope>GENE CLUSTER</scope>
    <scope>DISRUPTION PHENOTYPE</scope>
    <source>
        <strain>AB5075</strain>
    </source>
</reference>
<feature type="signal peptide" evidence="1">
    <location>
        <begin position="1"/>
        <end position="19"/>
    </location>
</feature>
<feature type="chain" id="PRO_5002299839" description="Hemophilin secretion modulator" evidence="1">
    <location>
        <begin position="20"/>
        <end position="496"/>
    </location>
</feature>
<feature type="transmembrane region" description="Beta stranded" evidence="1">
    <location>
        <begin position="198"/>
        <end position="208"/>
    </location>
</feature>
<feature type="transmembrane region" description="Beta stranded" evidence="1">
    <location>
        <begin position="253"/>
        <end position="263"/>
    </location>
</feature>
<feature type="transmembrane region" description="Beta stranded" evidence="1">
    <location>
        <begin position="268"/>
        <end position="277"/>
    </location>
</feature>
<feature type="transmembrane region" description="Beta stranded" evidence="1">
    <location>
        <begin position="291"/>
        <end position="301"/>
    </location>
</feature>
<feature type="transmembrane region" description="Beta stranded" evidence="1">
    <location>
        <begin position="305"/>
        <end position="315"/>
    </location>
</feature>
<feature type="transmembrane region" description="Beta stranded" evidence="1">
    <location>
        <begin position="327"/>
        <end position="337"/>
    </location>
</feature>
<feature type="transmembrane region" description="Beta stranded" evidence="1">
    <location>
        <begin position="341"/>
        <end position="351"/>
    </location>
</feature>
<feature type="transmembrane region" description="Beta stranded" evidence="1">
    <location>
        <begin position="365"/>
        <end position="374"/>
    </location>
</feature>
<feature type="transmembrane region" description="Beta stranded" evidence="1">
    <location>
        <begin position="380"/>
        <end position="389"/>
    </location>
</feature>
<feature type="transmembrane region" description="Beta stranded" evidence="1">
    <location>
        <begin position="403"/>
        <end position="413"/>
    </location>
</feature>
<feature type="transmembrane region" description="Beta stranded" evidence="1">
    <location>
        <begin position="418"/>
        <end position="427"/>
    </location>
</feature>
<feature type="transmembrane region" description="Beta stranded" evidence="1">
    <location>
        <begin position="446"/>
        <end position="455"/>
    </location>
</feature>
<feature type="transmembrane region" description="Beta stranded" evidence="1">
    <location>
        <begin position="462"/>
        <end position="472"/>
    </location>
</feature>
<feature type="transmembrane region" description="Beta stranded" evidence="1">
    <location>
        <begin position="486"/>
        <end position="495"/>
    </location>
</feature>
<sequence length="496" mass="57284">MKRTLLCCLTLLSCPFLYADEDTQLRLNQSLDQTLLQEQRQFHEQGTIRSTEQLPKLQINGQEYSVEQNPNDLAKALYLAVMQKQWLKATVYLEHYKKYVGYDRALTDFAEGAVARSQGQLKLAEQKFQSSLKQQPHNLICELELARVLFEQQKNKEAARLFISIQDQLKQSDPAVIPSGVLTTVNTIVQALKKRDSWQGSVSAGYTYVSNLNSSSEQSKTWTLYGRDSEGNMIPVREVTRGTPKAESAIGLDYEASLIKRYAIEGHHGVALRALAFGQSYNDHATFNESTININAGYSYFDLKNQIGVSPLFEHKRYGNDGLYNAWGARAEWMHFISADKAFKLEAESKDLNYQKYKTLDGVESSAFATFWKIFPDQWTFFGGLDVLDHSTQEKYMAAYQQQGVRLGLSKSWSTGFNTTLLSSYRWRLFDKYAETFLARRHDFEQNHTFVVQMPRFEFYGMTPNLTYRYNHNKSNVDWLYSYDKHNISFKLEHRF</sequence>
<comment type="function">
    <text evidence="2">Part of a high affinity heme acquisition system (PubMed:34725337). Mediates the secretion of the hemophilin HphA across the outer membrane into the extracellular environment (PubMed:34725337). Plays a supporting role for full virulence (PubMed:34725337).</text>
</comment>
<comment type="subcellular location">
    <subcellularLocation>
        <location evidence="5">Cell outer membrane</location>
        <topology evidence="1">Multi-pass membrane protein</topology>
    </subcellularLocation>
</comment>
<comment type="induction">
    <text evidence="2">Part of the hemO gene cluster.</text>
</comment>
<comment type="disruption phenotype">
    <text evidence="2">Knockout of the gene abrogates HphA secretion (PubMed:34725337). In a mouse pulmonary infection model, the mutant shows a small decrease in bacterial lung burden and systemic spread (PubMed:34725337).</text>
</comment>
<comment type="similarity">
    <text evidence="4">Belongs to the Slam family.</text>
</comment>
<proteinExistence type="evidence at transcript level"/>
<name>HSMA_ACIBA</name>
<gene>
    <name evidence="3" type="primary">hsmA</name>
    <name evidence="6" type="ORF">ABUW_2983</name>
</gene>
<accession>A0A0D5YKF0</accession>